<keyword id="KW-0129">CBS domain</keyword>
<keyword id="KW-1185">Reference proteome</keyword>
<keyword id="KW-0677">Repeat</keyword>
<sequence length="145" mass="16104">MKVLVKQLMSKSLFTINLDTTLDVALKSLNANSIHRLPVVDNDGNLKGIITDRDLRLATDSPFLPENNEDRLEKLRLHKVSSIMKQNPVTIEDFSPVVEAAKLMRVTNVGGLPVLDKKGRLIGMVTRSDLLDLLIKVLEPVPPQS</sequence>
<feature type="chain" id="PRO_0000392670" description="CBS domain-containing protein DDB_G0289609">
    <location>
        <begin position="1"/>
        <end position="145"/>
    </location>
</feature>
<feature type="domain" description="CBS 1" evidence="1">
    <location>
        <begin position="9"/>
        <end position="66"/>
    </location>
</feature>
<feature type="domain" description="CBS 2" evidence="1">
    <location>
        <begin position="84"/>
        <end position="141"/>
    </location>
</feature>
<accession>Q54H97</accession>
<proteinExistence type="evidence at transcript level"/>
<comment type="developmental stage">
    <text evidence="2">Expressed in PstA and PstO cells in the slug stage, becoming preferentially restricted to PstO cells during culmination.</text>
</comment>
<evidence type="ECO:0000255" key="1">
    <source>
        <dbReference type="PROSITE-ProRule" id="PRU00703"/>
    </source>
</evidence>
<evidence type="ECO:0000269" key="2">
    <source>
    </source>
</evidence>
<name>Y8960_DICDI</name>
<gene>
    <name type="ORF">DDB_G0289609</name>
</gene>
<protein>
    <recommendedName>
        <fullName>CBS domain-containing protein DDB_G0289609</fullName>
    </recommendedName>
</protein>
<organism>
    <name type="scientific">Dictyostelium discoideum</name>
    <name type="common">Social amoeba</name>
    <dbReference type="NCBI Taxonomy" id="44689"/>
    <lineage>
        <taxon>Eukaryota</taxon>
        <taxon>Amoebozoa</taxon>
        <taxon>Evosea</taxon>
        <taxon>Eumycetozoa</taxon>
        <taxon>Dictyostelia</taxon>
        <taxon>Dictyosteliales</taxon>
        <taxon>Dictyosteliaceae</taxon>
        <taxon>Dictyostelium</taxon>
    </lineage>
</organism>
<dbReference type="EMBL" id="AAFI02000147">
    <property type="protein sequence ID" value="EAL62622.1"/>
    <property type="molecule type" value="Genomic_DNA"/>
</dbReference>
<dbReference type="RefSeq" id="XP_636127.1">
    <property type="nucleotide sequence ID" value="XM_631035.1"/>
</dbReference>
<dbReference type="SMR" id="Q54H97"/>
<dbReference type="STRING" id="44689.Q54H97"/>
<dbReference type="PaxDb" id="44689-DDB0230005"/>
<dbReference type="EnsemblProtists" id="EAL62622">
    <property type="protein sequence ID" value="EAL62622"/>
    <property type="gene ID" value="DDB_G0289609"/>
</dbReference>
<dbReference type="GeneID" id="8627230"/>
<dbReference type="KEGG" id="ddi:DDB_G0289609"/>
<dbReference type="dictyBase" id="DDB_G0289609"/>
<dbReference type="VEuPathDB" id="AmoebaDB:DDB_G0289609"/>
<dbReference type="eggNOG" id="ENOG502SC5H">
    <property type="taxonomic scope" value="Eukaryota"/>
</dbReference>
<dbReference type="HOGENOM" id="CLU_1565764_0_0_1"/>
<dbReference type="InParanoid" id="Q54H97"/>
<dbReference type="OMA" id="HTNIMTA"/>
<dbReference type="PhylomeDB" id="Q54H97"/>
<dbReference type="PRO" id="PR:Q54H97"/>
<dbReference type="Proteomes" id="UP000002195">
    <property type="component" value="Chromosome 5"/>
</dbReference>
<dbReference type="CDD" id="cd04584">
    <property type="entry name" value="CBS_pair_AcuB_like"/>
    <property type="match status" value="1"/>
</dbReference>
<dbReference type="Gene3D" id="3.10.580.10">
    <property type="entry name" value="CBS-domain"/>
    <property type="match status" value="1"/>
</dbReference>
<dbReference type="InterPro" id="IPR000644">
    <property type="entry name" value="CBS_dom"/>
</dbReference>
<dbReference type="InterPro" id="IPR046342">
    <property type="entry name" value="CBS_dom_sf"/>
</dbReference>
<dbReference type="InterPro" id="IPR051257">
    <property type="entry name" value="Diverse_CBS-Domain"/>
</dbReference>
<dbReference type="PANTHER" id="PTHR43080:SF2">
    <property type="entry name" value="CBS DOMAIN-CONTAINING PROTEIN"/>
    <property type="match status" value="1"/>
</dbReference>
<dbReference type="PANTHER" id="PTHR43080">
    <property type="entry name" value="CBS DOMAIN-CONTAINING PROTEIN CBSX3, MITOCHONDRIAL"/>
    <property type="match status" value="1"/>
</dbReference>
<dbReference type="Pfam" id="PF00571">
    <property type="entry name" value="CBS"/>
    <property type="match status" value="2"/>
</dbReference>
<dbReference type="SMART" id="SM00116">
    <property type="entry name" value="CBS"/>
    <property type="match status" value="2"/>
</dbReference>
<dbReference type="SUPFAM" id="SSF54631">
    <property type="entry name" value="CBS-domain pair"/>
    <property type="match status" value="1"/>
</dbReference>
<dbReference type="PROSITE" id="PS51371">
    <property type="entry name" value="CBS"/>
    <property type="match status" value="2"/>
</dbReference>
<reference key="1">
    <citation type="journal article" date="2005" name="Nature">
        <title>The genome of the social amoeba Dictyostelium discoideum.</title>
        <authorList>
            <person name="Eichinger L."/>
            <person name="Pachebat J.A."/>
            <person name="Gloeckner G."/>
            <person name="Rajandream M.A."/>
            <person name="Sucgang R."/>
            <person name="Berriman M."/>
            <person name="Song J."/>
            <person name="Olsen R."/>
            <person name="Szafranski K."/>
            <person name="Xu Q."/>
            <person name="Tunggal B."/>
            <person name="Kummerfeld S."/>
            <person name="Madera M."/>
            <person name="Konfortov B.A."/>
            <person name="Rivero F."/>
            <person name="Bankier A.T."/>
            <person name="Lehmann R."/>
            <person name="Hamlin N."/>
            <person name="Davies R."/>
            <person name="Gaudet P."/>
            <person name="Fey P."/>
            <person name="Pilcher K."/>
            <person name="Chen G."/>
            <person name="Saunders D."/>
            <person name="Sodergren E.J."/>
            <person name="Davis P."/>
            <person name="Kerhornou A."/>
            <person name="Nie X."/>
            <person name="Hall N."/>
            <person name="Anjard C."/>
            <person name="Hemphill L."/>
            <person name="Bason N."/>
            <person name="Farbrother P."/>
            <person name="Desany B."/>
            <person name="Just E."/>
            <person name="Morio T."/>
            <person name="Rost R."/>
            <person name="Churcher C.M."/>
            <person name="Cooper J."/>
            <person name="Haydock S."/>
            <person name="van Driessche N."/>
            <person name="Cronin A."/>
            <person name="Goodhead I."/>
            <person name="Muzny D.M."/>
            <person name="Mourier T."/>
            <person name="Pain A."/>
            <person name="Lu M."/>
            <person name="Harper D."/>
            <person name="Lindsay R."/>
            <person name="Hauser H."/>
            <person name="James K.D."/>
            <person name="Quiles M."/>
            <person name="Madan Babu M."/>
            <person name="Saito T."/>
            <person name="Buchrieser C."/>
            <person name="Wardroper A."/>
            <person name="Felder M."/>
            <person name="Thangavelu M."/>
            <person name="Johnson D."/>
            <person name="Knights A."/>
            <person name="Loulseged H."/>
            <person name="Mungall K.L."/>
            <person name="Oliver K."/>
            <person name="Price C."/>
            <person name="Quail M.A."/>
            <person name="Urushihara H."/>
            <person name="Hernandez J."/>
            <person name="Rabbinowitsch E."/>
            <person name="Steffen D."/>
            <person name="Sanders M."/>
            <person name="Ma J."/>
            <person name="Kohara Y."/>
            <person name="Sharp S."/>
            <person name="Simmonds M.N."/>
            <person name="Spiegler S."/>
            <person name="Tivey A."/>
            <person name="Sugano S."/>
            <person name="White B."/>
            <person name="Walker D."/>
            <person name="Woodward J.R."/>
            <person name="Winckler T."/>
            <person name="Tanaka Y."/>
            <person name="Shaulsky G."/>
            <person name="Schleicher M."/>
            <person name="Weinstock G.M."/>
            <person name="Rosenthal A."/>
            <person name="Cox E.C."/>
            <person name="Chisholm R.L."/>
            <person name="Gibbs R.A."/>
            <person name="Loomis W.F."/>
            <person name="Platzer M."/>
            <person name="Kay R.R."/>
            <person name="Williams J.G."/>
            <person name="Dear P.H."/>
            <person name="Noegel A.A."/>
            <person name="Barrell B.G."/>
            <person name="Kuspa A."/>
        </authorList>
    </citation>
    <scope>NUCLEOTIDE SEQUENCE [LARGE SCALE GENOMIC DNA]</scope>
    <source>
        <strain>AX4</strain>
    </source>
</reference>
<reference key="2">
    <citation type="journal article" date="2003" name="Eukaryot. Cell">
        <title>Changing patterns of gene expression in Dictyostelium prestalk cell subtypes recognized by in situ hybridization with genes from microarray analyses.</title>
        <authorList>
            <person name="Maeda M."/>
            <person name="Sakamoto H."/>
            <person name="Iranfar N."/>
            <person name="Fuller D."/>
            <person name="Maruo T."/>
            <person name="Ogihara S."/>
            <person name="Morio T."/>
            <person name="Urushihara H."/>
            <person name="Tanaka Y."/>
            <person name="Loomis W.F."/>
        </authorList>
    </citation>
    <scope>DEVELOPMENTAL STAGE [LARGE SCALE ANALYSIS]</scope>
</reference>